<gene>
    <name type="ORF">F40A3.3</name>
</gene>
<comment type="alternative products">
    <event type="alternative splicing"/>
    <isoform>
        <id>O16264-1</id>
        <name>a</name>
        <sequence type="displayed"/>
    </isoform>
    <isoform>
        <id>O16264-2</id>
        <name>b</name>
        <sequence type="described" ref="VSP_015556"/>
    </isoform>
</comment>
<comment type="similarity">
    <text evidence="1">Belongs to the phosphatidylethanolamine-binding protein family.</text>
</comment>
<name>PEBPH_CAEEL</name>
<accession>O16264</accession>
<accession>Q4W526</accession>
<reference key="1">
    <citation type="journal article" date="1998" name="Science">
        <title>Genome sequence of the nematode C. elegans: a platform for investigating biology.</title>
        <authorList>
            <consortium name="The C. elegans sequencing consortium"/>
        </authorList>
    </citation>
    <scope>NUCLEOTIDE SEQUENCE [LARGE SCALE GENOMIC DNA]</scope>
    <scope>ALTERNATIVE SPLICING</scope>
    <source>
        <strain>Bristol N2</strain>
    </source>
</reference>
<keyword id="KW-0025">Alternative splicing</keyword>
<keyword id="KW-0446">Lipid-binding</keyword>
<keyword id="KW-1185">Reference proteome</keyword>
<organism>
    <name type="scientific">Caenorhabditis elegans</name>
    <dbReference type="NCBI Taxonomy" id="6239"/>
    <lineage>
        <taxon>Eukaryota</taxon>
        <taxon>Metazoa</taxon>
        <taxon>Ecdysozoa</taxon>
        <taxon>Nematoda</taxon>
        <taxon>Chromadorea</taxon>
        <taxon>Rhabditida</taxon>
        <taxon>Rhabditina</taxon>
        <taxon>Rhabditomorpha</taxon>
        <taxon>Rhabditoidea</taxon>
        <taxon>Rhabditidae</taxon>
        <taxon>Peloderinae</taxon>
        <taxon>Caenorhabditis</taxon>
    </lineage>
</organism>
<protein>
    <recommendedName>
        <fullName>Phosphatidylethanolamine-binding protein homolog F40A3.3</fullName>
    </recommendedName>
</protein>
<feature type="chain" id="PRO_0000204748" description="Phosphatidylethanolamine-binding protein homolog F40A3.3">
    <location>
        <begin position="1"/>
        <end position="221"/>
    </location>
</feature>
<feature type="splice variant" id="VSP_015556" description="In isoform b." evidence="1">
    <location>
        <begin position="1"/>
        <end position="36"/>
    </location>
</feature>
<dbReference type="EMBL" id="FO080809">
    <property type="protein sequence ID" value="CCD66958.1"/>
    <property type="molecule type" value="Genomic_DNA"/>
</dbReference>
<dbReference type="EMBL" id="FO080809">
    <property type="protein sequence ID" value="CCD66959.1"/>
    <property type="molecule type" value="Genomic_DNA"/>
</dbReference>
<dbReference type="PIR" id="T31721">
    <property type="entry name" value="T31721"/>
</dbReference>
<dbReference type="RefSeq" id="NP_001023903.1">
    <property type="nucleotide sequence ID" value="NM_001028732.5"/>
</dbReference>
<dbReference type="RefSeq" id="NP_001023904.1">
    <property type="nucleotide sequence ID" value="NM_001028733.5"/>
</dbReference>
<dbReference type="RefSeq" id="NP_001367640.1">
    <molecule id="O16264-1"/>
    <property type="nucleotide sequence ID" value="NM_001380702.2"/>
</dbReference>
<dbReference type="RefSeq" id="NP_001379787.1">
    <molecule id="O16264-2"/>
    <property type="nucleotide sequence ID" value="NM_001392552.1"/>
</dbReference>
<dbReference type="SMR" id="O16264"/>
<dbReference type="BioGRID" id="44211">
    <property type="interactions" value="38"/>
</dbReference>
<dbReference type="FunCoup" id="O16264">
    <property type="interactions" value="630"/>
</dbReference>
<dbReference type="STRING" id="6239.F40A3.3c.1"/>
<dbReference type="MEROPS" id="I51.002"/>
<dbReference type="PaxDb" id="6239-F40A3.3a"/>
<dbReference type="PeptideAtlas" id="O16264"/>
<dbReference type="EnsemblMetazoa" id="F40A3.3a.1">
    <molecule id="O16264-1"/>
    <property type="protein sequence ID" value="F40A3.3a.1"/>
    <property type="gene ID" value="WBGene00018218"/>
</dbReference>
<dbReference type="EnsemblMetazoa" id="F40A3.3a.2">
    <molecule id="O16264-1"/>
    <property type="protein sequence ID" value="F40A3.3a.2"/>
    <property type="gene ID" value="WBGene00018218"/>
</dbReference>
<dbReference type="EnsemblMetazoa" id="F40A3.3b.1">
    <molecule id="O16264-2"/>
    <property type="protein sequence ID" value="F40A3.3b.1"/>
    <property type="gene ID" value="WBGene00018218"/>
</dbReference>
<dbReference type="GeneID" id="179168"/>
<dbReference type="UCSC" id="F40A3.3a">
    <molecule id="O16264-1"/>
    <property type="organism name" value="c. elegans"/>
</dbReference>
<dbReference type="AGR" id="WB:WBGene00018218"/>
<dbReference type="WormBase" id="F40A3.3a">
    <molecule id="O16264-1"/>
    <property type="protein sequence ID" value="CE10146"/>
    <property type="gene ID" value="WBGene00018218"/>
</dbReference>
<dbReference type="WormBase" id="F40A3.3b">
    <molecule id="O16264-2"/>
    <property type="protein sequence ID" value="CE38516"/>
    <property type="gene ID" value="WBGene00018218"/>
</dbReference>
<dbReference type="eggNOG" id="KOG3346">
    <property type="taxonomic scope" value="Eukaryota"/>
</dbReference>
<dbReference type="GeneTree" id="ENSGT00940000167139"/>
<dbReference type="InParanoid" id="O16264"/>
<dbReference type="OrthoDB" id="2506647at2759"/>
<dbReference type="PhylomeDB" id="O16264"/>
<dbReference type="Reactome" id="R-CEL-5674135">
    <property type="pathway name" value="MAP2K and MAPK activation"/>
</dbReference>
<dbReference type="Reactome" id="R-CEL-5675221">
    <property type="pathway name" value="Negative regulation of MAPK pathway"/>
</dbReference>
<dbReference type="PRO" id="PR:O16264"/>
<dbReference type="Proteomes" id="UP000001940">
    <property type="component" value="Chromosome V"/>
</dbReference>
<dbReference type="Bgee" id="WBGene00018218">
    <property type="expression patterns" value="Expressed in larva and 4 other cell types or tissues"/>
</dbReference>
<dbReference type="ExpressionAtlas" id="O16264">
    <property type="expression patterns" value="baseline and differential"/>
</dbReference>
<dbReference type="GO" id="GO:0005739">
    <property type="term" value="C:mitochondrion"/>
    <property type="evidence" value="ECO:0007005"/>
    <property type="project" value="WormBase"/>
</dbReference>
<dbReference type="GO" id="GO:0008289">
    <property type="term" value="F:lipid binding"/>
    <property type="evidence" value="ECO:0007669"/>
    <property type="project" value="UniProtKB-KW"/>
</dbReference>
<dbReference type="CDD" id="cd00866">
    <property type="entry name" value="PEBP_euk"/>
    <property type="match status" value="1"/>
</dbReference>
<dbReference type="FunFam" id="3.90.280.10:FF:000006">
    <property type="entry name" value="protein D3"/>
    <property type="match status" value="1"/>
</dbReference>
<dbReference type="Gene3D" id="3.90.280.10">
    <property type="entry name" value="PEBP-like"/>
    <property type="match status" value="1"/>
</dbReference>
<dbReference type="InterPro" id="IPR008914">
    <property type="entry name" value="PEBP"/>
</dbReference>
<dbReference type="InterPro" id="IPR036610">
    <property type="entry name" value="PEBP-like_sf"/>
</dbReference>
<dbReference type="InterPro" id="IPR035810">
    <property type="entry name" value="PEBP_euk"/>
</dbReference>
<dbReference type="InterPro" id="IPR001858">
    <property type="entry name" value="Phosphatidylethanolamine-bd_CS"/>
</dbReference>
<dbReference type="PANTHER" id="PTHR11362">
    <property type="entry name" value="PHOSPHATIDYLETHANOLAMINE-BINDING PROTEIN"/>
    <property type="match status" value="1"/>
</dbReference>
<dbReference type="PANTHER" id="PTHR11362:SF82">
    <property type="entry name" value="PHOSPHATIDYLETHANOLAMINE-BINDING PROTEIN 4"/>
    <property type="match status" value="1"/>
</dbReference>
<dbReference type="Pfam" id="PF01161">
    <property type="entry name" value="PBP"/>
    <property type="match status" value="1"/>
</dbReference>
<dbReference type="SUPFAM" id="SSF49777">
    <property type="entry name" value="PEBP-like"/>
    <property type="match status" value="1"/>
</dbReference>
<dbReference type="PROSITE" id="PS01220">
    <property type="entry name" value="PBP"/>
    <property type="match status" value="1"/>
</dbReference>
<proteinExistence type="inferred from homology"/>
<sequence>MVVLVTRSLLPALFFASRAPFAAATTSARFQRGLATMAAEAFTKHEVIPDVLASNPPSKVVSVKFNSGVEANLGNVLTPTQVKDTPEVKWDAEPGALYTLIKTDPDAPSRKEPTYREWHHWLVVNIPGNDIAKGDTLSEYIGAGPPPKTGLHRYVYLIYKQSGRIEDAEHGRLTNTSGDKRGGWKAADFVAKHKLGAPVFGNLFQAEYDDYVPILNKQLGA</sequence>
<evidence type="ECO:0000305" key="1"/>